<keyword id="KW-0067">ATP-binding</keyword>
<keyword id="KW-0997">Cell inner membrane</keyword>
<keyword id="KW-1003">Cell membrane</keyword>
<keyword id="KW-0963">Cytoplasm</keyword>
<keyword id="KW-0472">Membrane</keyword>
<keyword id="KW-0479">Metal-binding</keyword>
<keyword id="KW-0547">Nucleotide-binding</keyword>
<keyword id="KW-0653">Protein transport</keyword>
<keyword id="KW-1278">Translocase</keyword>
<keyword id="KW-0811">Translocation</keyword>
<keyword id="KW-0813">Transport</keyword>
<keyword id="KW-0862">Zinc</keyword>
<feature type="chain" id="PRO_1000184253" description="Protein translocase subunit SecA">
    <location>
        <begin position="1"/>
        <end position="908"/>
    </location>
</feature>
<feature type="region of interest" description="Disordered" evidence="2">
    <location>
        <begin position="852"/>
        <end position="908"/>
    </location>
</feature>
<feature type="compositionally biased region" description="Low complexity" evidence="2">
    <location>
        <begin position="852"/>
        <end position="863"/>
    </location>
</feature>
<feature type="compositionally biased region" description="Basic residues" evidence="2">
    <location>
        <begin position="898"/>
        <end position="908"/>
    </location>
</feature>
<feature type="binding site" evidence="1">
    <location>
        <position position="87"/>
    </location>
    <ligand>
        <name>ATP</name>
        <dbReference type="ChEBI" id="CHEBI:30616"/>
    </ligand>
</feature>
<feature type="binding site" evidence="1">
    <location>
        <begin position="105"/>
        <end position="109"/>
    </location>
    <ligand>
        <name>ATP</name>
        <dbReference type="ChEBI" id="CHEBI:30616"/>
    </ligand>
</feature>
<feature type="binding site" evidence="1">
    <location>
        <position position="513"/>
    </location>
    <ligand>
        <name>ATP</name>
        <dbReference type="ChEBI" id="CHEBI:30616"/>
    </ligand>
</feature>
<feature type="binding site" evidence="1">
    <location>
        <position position="892"/>
    </location>
    <ligand>
        <name>Zn(2+)</name>
        <dbReference type="ChEBI" id="CHEBI:29105"/>
    </ligand>
</feature>
<feature type="binding site" evidence="1">
    <location>
        <position position="894"/>
    </location>
    <ligand>
        <name>Zn(2+)</name>
        <dbReference type="ChEBI" id="CHEBI:29105"/>
    </ligand>
</feature>
<feature type="binding site" evidence="1">
    <location>
        <position position="903"/>
    </location>
    <ligand>
        <name>Zn(2+)</name>
        <dbReference type="ChEBI" id="CHEBI:29105"/>
    </ligand>
</feature>
<feature type="binding site" evidence="1">
    <location>
        <position position="904"/>
    </location>
    <ligand>
        <name>Zn(2+)</name>
        <dbReference type="ChEBI" id="CHEBI:29105"/>
    </ligand>
</feature>
<accession>B7VJ09</accession>
<evidence type="ECO:0000255" key="1">
    <source>
        <dbReference type="HAMAP-Rule" id="MF_01382"/>
    </source>
</evidence>
<evidence type="ECO:0000256" key="2">
    <source>
        <dbReference type="SAM" id="MobiDB-lite"/>
    </source>
</evidence>
<proteinExistence type="inferred from homology"/>
<reference key="1">
    <citation type="submission" date="2009-02" db="EMBL/GenBank/DDBJ databases">
        <title>Vibrio splendidus str. LGP32 complete genome.</title>
        <authorList>
            <person name="Mazel D."/>
            <person name="Le Roux F."/>
        </authorList>
    </citation>
    <scope>NUCLEOTIDE SEQUENCE [LARGE SCALE GENOMIC DNA]</scope>
    <source>
        <strain>LGP32</strain>
    </source>
</reference>
<sequence length="908" mass="103054">MITKLLTKVIGSRNDRTLRRLRKIVKEINNFEPTFEALSDDELKAKTVEFRERLDKGESLDQLLPEAFATVREASKRVYGMRHFDVQMIGGMVLNAGQIAEMRTGEGKTLTATLPAYLNALPSKGVHVITVNDYLAKRDAETNRPLFEFLGMTVGVNVANMAPPEKKEAYQADILYGTNNEFGFDYLRDNMAFRAEDRVQRERFFAVVDEVDSILIDEARTPLIISGPAEDSSDLYTRINTLIPSLERQDKEDSEEYRGEGHYTMDEKSKQVHLTENGQEFVEELMVKNGLMEEGDTLYSPTNISLLHHVNAALRAHVLFEKNVDYIVTEEGEVVIVDEHTGRTMPGRRWSEGLHQAVEAKEGVKIQNENQTLASITFQNFFRLYEKLSGMTGTADTEAFEFQSIYGLETVVIPTNKPMVRNDMPDVVYRTEEDKFNAIIEDIKDRVAAGQPSLVGTVSIEKSELLSNALKKSKIKHNVLNAKFHEMEAEIVAQAGMPGAVTIATNMAGRGTDIVLGGSWQAQLEKLDNPTKEQIEKIKADWRIIHDKVLESGGLHIIGTERHESRRIDNQLRGRSGRQGDAGSSRFYLSMEDSLLRIFTSDRMAGLIQSGMDEGEAIESKMLSRSIEKAQRKVEGRNFDIRKQLLEYDDVANDQRKVVYELRDELMSSDDISEMIEHNREDVLASVIDEYIAPQSLEDMWDIAGLQDRLKNDFDLDFDIQGWLDEDDKLYEEALRERILGMAVDSYKQKEEVVGAQVLRNFEKSVMLQTLDGLWKEHLAAMDHLRQGIHLRGYAQKNPKQEYKRESFELFEGLLDVLKTDVVTILSKVRVQQQEEVEKMEAQRQAQAEQAARRAQAQHATAENQLADDEAEAASPQTVVRDERKVGRNEPCPCGSGKKYKQCHGKID</sequence>
<dbReference type="EC" id="7.4.2.8" evidence="1"/>
<dbReference type="EMBL" id="FM954972">
    <property type="protein sequence ID" value="CAV17463.1"/>
    <property type="molecule type" value="Genomic_DNA"/>
</dbReference>
<dbReference type="SMR" id="B7VJ09"/>
<dbReference type="STRING" id="575788.VS_0456"/>
<dbReference type="KEGG" id="vsp:VS_0456"/>
<dbReference type="PATRIC" id="fig|575788.5.peg.1823"/>
<dbReference type="eggNOG" id="COG0653">
    <property type="taxonomic scope" value="Bacteria"/>
</dbReference>
<dbReference type="HOGENOM" id="CLU_005314_3_0_6"/>
<dbReference type="Proteomes" id="UP000009100">
    <property type="component" value="Chromosome 1"/>
</dbReference>
<dbReference type="GO" id="GO:0031522">
    <property type="term" value="C:cell envelope Sec protein transport complex"/>
    <property type="evidence" value="ECO:0007669"/>
    <property type="project" value="TreeGrafter"/>
</dbReference>
<dbReference type="GO" id="GO:0005829">
    <property type="term" value="C:cytosol"/>
    <property type="evidence" value="ECO:0007669"/>
    <property type="project" value="TreeGrafter"/>
</dbReference>
<dbReference type="GO" id="GO:0005886">
    <property type="term" value="C:plasma membrane"/>
    <property type="evidence" value="ECO:0007669"/>
    <property type="project" value="UniProtKB-SubCell"/>
</dbReference>
<dbReference type="GO" id="GO:0005524">
    <property type="term" value="F:ATP binding"/>
    <property type="evidence" value="ECO:0007669"/>
    <property type="project" value="UniProtKB-UniRule"/>
</dbReference>
<dbReference type="GO" id="GO:0046872">
    <property type="term" value="F:metal ion binding"/>
    <property type="evidence" value="ECO:0007669"/>
    <property type="project" value="UniProtKB-KW"/>
</dbReference>
<dbReference type="GO" id="GO:0008564">
    <property type="term" value="F:protein-exporting ATPase activity"/>
    <property type="evidence" value="ECO:0007669"/>
    <property type="project" value="UniProtKB-EC"/>
</dbReference>
<dbReference type="GO" id="GO:0065002">
    <property type="term" value="P:intracellular protein transmembrane transport"/>
    <property type="evidence" value="ECO:0007669"/>
    <property type="project" value="UniProtKB-UniRule"/>
</dbReference>
<dbReference type="GO" id="GO:0017038">
    <property type="term" value="P:protein import"/>
    <property type="evidence" value="ECO:0007669"/>
    <property type="project" value="InterPro"/>
</dbReference>
<dbReference type="GO" id="GO:0006605">
    <property type="term" value="P:protein targeting"/>
    <property type="evidence" value="ECO:0007669"/>
    <property type="project" value="UniProtKB-UniRule"/>
</dbReference>
<dbReference type="GO" id="GO:0043952">
    <property type="term" value="P:protein transport by the Sec complex"/>
    <property type="evidence" value="ECO:0007669"/>
    <property type="project" value="TreeGrafter"/>
</dbReference>
<dbReference type="CDD" id="cd17928">
    <property type="entry name" value="DEXDc_SecA"/>
    <property type="match status" value="1"/>
</dbReference>
<dbReference type="CDD" id="cd18803">
    <property type="entry name" value="SF2_C_secA"/>
    <property type="match status" value="1"/>
</dbReference>
<dbReference type="FunFam" id="1.10.3060.10:FF:000001">
    <property type="entry name" value="Preprotein translocase subunit SecA"/>
    <property type="match status" value="1"/>
</dbReference>
<dbReference type="FunFam" id="3.40.50.300:FF:000081">
    <property type="entry name" value="Preprotein translocase subunit SecA"/>
    <property type="match status" value="1"/>
</dbReference>
<dbReference type="FunFam" id="3.40.50.300:FF:000113">
    <property type="entry name" value="Preprotein translocase subunit SecA"/>
    <property type="match status" value="1"/>
</dbReference>
<dbReference type="FunFam" id="3.90.1440.10:FF:000001">
    <property type="entry name" value="Preprotein translocase subunit SecA"/>
    <property type="match status" value="1"/>
</dbReference>
<dbReference type="Gene3D" id="1.10.3060.10">
    <property type="entry name" value="Helical scaffold and wing domains of SecA"/>
    <property type="match status" value="1"/>
</dbReference>
<dbReference type="Gene3D" id="3.40.50.300">
    <property type="entry name" value="P-loop containing nucleotide triphosphate hydrolases"/>
    <property type="match status" value="2"/>
</dbReference>
<dbReference type="Gene3D" id="3.90.1440.10">
    <property type="entry name" value="SecA, preprotein cross-linking domain"/>
    <property type="match status" value="1"/>
</dbReference>
<dbReference type="HAMAP" id="MF_01382">
    <property type="entry name" value="SecA"/>
    <property type="match status" value="1"/>
</dbReference>
<dbReference type="InterPro" id="IPR014001">
    <property type="entry name" value="Helicase_ATP-bd"/>
</dbReference>
<dbReference type="InterPro" id="IPR027417">
    <property type="entry name" value="P-loop_NTPase"/>
</dbReference>
<dbReference type="InterPro" id="IPR004027">
    <property type="entry name" value="SEC_C_motif"/>
</dbReference>
<dbReference type="InterPro" id="IPR000185">
    <property type="entry name" value="SecA"/>
</dbReference>
<dbReference type="InterPro" id="IPR020937">
    <property type="entry name" value="SecA_CS"/>
</dbReference>
<dbReference type="InterPro" id="IPR011115">
    <property type="entry name" value="SecA_DEAD"/>
</dbReference>
<dbReference type="InterPro" id="IPR014018">
    <property type="entry name" value="SecA_motor_DEAD"/>
</dbReference>
<dbReference type="InterPro" id="IPR011130">
    <property type="entry name" value="SecA_preprotein_X-link_dom"/>
</dbReference>
<dbReference type="InterPro" id="IPR044722">
    <property type="entry name" value="SecA_SF2_C"/>
</dbReference>
<dbReference type="InterPro" id="IPR011116">
    <property type="entry name" value="SecA_Wing/Scaffold"/>
</dbReference>
<dbReference type="InterPro" id="IPR036266">
    <property type="entry name" value="SecA_Wing/Scaffold_sf"/>
</dbReference>
<dbReference type="InterPro" id="IPR036670">
    <property type="entry name" value="SecA_X-link_sf"/>
</dbReference>
<dbReference type="NCBIfam" id="NF009538">
    <property type="entry name" value="PRK12904.1"/>
    <property type="match status" value="1"/>
</dbReference>
<dbReference type="NCBIfam" id="TIGR00963">
    <property type="entry name" value="secA"/>
    <property type="match status" value="1"/>
</dbReference>
<dbReference type="PANTHER" id="PTHR30612:SF0">
    <property type="entry name" value="CHLOROPLAST PROTEIN-TRANSPORTING ATPASE"/>
    <property type="match status" value="1"/>
</dbReference>
<dbReference type="PANTHER" id="PTHR30612">
    <property type="entry name" value="SECA INNER MEMBRANE COMPONENT OF SEC PROTEIN SECRETION SYSTEM"/>
    <property type="match status" value="1"/>
</dbReference>
<dbReference type="Pfam" id="PF21090">
    <property type="entry name" value="P-loop_SecA"/>
    <property type="match status" value="1"/>
</dbReference>
<dbReference type="Pfam" id="PF02810">
    <property type="entry name" value="SEC-C"/>
    <property type="match status" value="1"/>
</dbReference>
<dbReference type="Pfam" id="PF07517">
    <property type="entry name" value="SecA_DEAD"/>
    <property type="match status" value="1"/>
</dbReference>
<dbReference type="Pfam" id="PF01043">
    <property type="entry name" value="SecA_PP_bind"/>
    <property type="match status" value="1"/>
</dbReference>
<dbReference type="Pfam" id="PF07516">
    <property type="entry name" value="SecA_SW"/>
    <property type="match status" value="1"/>
</dbReference>
<dbReference type="PRINTS" id="PR00906">
    <property type="entry name" value="SECA"/>
</dbReference>
<dbReference type="SMART" id="SM00957">
    <property type="entry name" value="SecA_DEAD"/>
    <property type="match status" value="1"/>
</dbReference>
<dbReference type="SMART" id="SM00958">
    <property type="entry name" value="SecA_PP_bind"/>
    <property type="match status" value="1"/>
</dbReference>
<dbReference type="SUPFAM" id="SSF81886">
    <property type="entry name" value="Helical scaffold and wing domains of SecA"/>
    <property type="match status" value="1"/>
</dbReference>
<dbReference type="SUPFAM" id="SSF52540">
    <property type="entry name" value="P-loop containing nucleoside triphosphate hydrolases"/>
    <property type="match status" value="2"/>
</dbReference>
<dbReference type="SUPFAM" id="SSF81767">
    <property type="entry name" value="Pre-protein crosslinking domain of SecA"/>
    <property type="match status" value="1"/>
</dbReference>
<dbReference type="PROSITE" id="PS01312">
    <property type="entry name" value="SECA"/>
    <property type="match status" value="1"/>
</dbReference>
<dbReference type="PROSITE" id="PS51196">
    <property type="entry name" value="SECA_MOTOR_DEAD"/>
    <property type="match status" value="1"/>
</dbReference>
<name>SECA_VIBA3</name>
<gene>
    <name evidence="1" type="primary">secA</name>
    <name type="ordered locus">VS_0456</name>
</gene>
<protein>
    <recommendedName>
        <fullName evidence="1">Protein translocase subunit SecA</fullName>
        <ecNumber evidence="1">7.4.2.8</ecNumber>
    </recommendedName>
</protein>
<organism>
    <name type="scientific">Vibrio atlanticus (strain LGP32)</name>
    <name type="common">Vibrio splendidus (strain Mel32)</name>
    <dbReference type="NCBI Taxonomy" id="575788"/>
    <lineage>
        <taxon>Bacteria</taxon>
        <taxon>Pseudomonadati</taxon>
        <taxon>Pseudomonadota</taxon>
        <taxon>Gammaproteobacteria</taxon>
        <taxon>Vibrionales</taxon>
        <taxon>Vibrionaceae</taxon>
        <taxon>Vibrio</taxon>
    </lineage>
</organism>
<comment type="function">
    <text evidence="1">Part of the Sec protein translocase complex. Interacts with the SecYEG preprotein conducting channel. Has a central role in coupling the hydrolysis of ATP to the transfer of proteins into and across the cell membrane, serving both as a receptor for the preprotein-SecB complex and as an ATP-driven molecular motor driving the stepwise translocation of polypeptide chains across the membrane.</text>
</comment>
<comment type="catalytic activity">
    <reaction evidence="1">
        <text>ATP + H2O + cellular proteinSide 1 = ADP + phosphate + cellular proteinSide 2.</text>
        <dbReference type="EC" id="7.4.2.8"/>
    </reaction>
</comment>
<comment type="cofactor">
    <cofactor evidence="1">
        <name>Zn(2+)</name>
        <dbReference type="ChEBI" id="CHEBI:29105"/>
    </cofactor>
    <text evidence="1">May bind 1 zinc ion per subunit.</text>
</comment>
<comment type="subunit">
    <text evidence="1">Monomer and homodimer. Part of the essential Sec protein translocation apparatus which comprises SecA, SecYEG and auxiliary proteins SecDF-YajC and YidC.</text>
</comment>
<comment type="subcellular location">
    <subcellularLocation>
        <location evidence="1">Cell inner membrane</location>
        <topology evidence="1">Peripheral membrane protein</topology>
        <orientation evidence="1">Cytoplasmic side</orientation>
    </subcellularLocation>
    <subcellularLocation>
        <location evidence="1">Cytoplasm</location>
    </subcellularLocation>
    <text evidence="1">Distribution is 50-50.</text>
</comment>
<comment type="similarity">
    <text evidence="1">Belongs to the SecA family.</text>
</comment>